<name>MTX2_XANOR</name>
<comment type="function">
    <text evidence="4 7">A methylase that recognizes the double-stranded sequence 5'-CGATCG-3', methylates C-? on both strands and protects the DNA from cleavage by the XorII endonuclease.</text>
</comment>
<comment type="catalytic activity">
    <reaction evidence="2">
        <text>a 2'-deoxycytidine in DNA + S-adenosyl-L-methionine = a 5-methyl-2'-deoxycytidine in DNA + S-adenosyl-L-homocysteine + H(+)</text>
        <dbReference type="Rhea" id="RHEA:13681"/>
        <dbReference type="Rhea" id="RHEA-COMP:11369"/>
        <dbReference type="Rhea" id="RHEA-COMP:11370"/>
        <dbReference type="ChEBI" id="CHEBI:15378"/>
        <dbReference type="ChEBI" id="CHEBI:57856"/>
        <dbReference type="ChEBI" id="CHEBI:59789"/>
        <dbReference type="ChEBI" id="CHEBI:85452"/>
        <dbReference type="ChEBI" id="CHEBI:85454"/>
        <dbReference type="EC" id="2.1.1.37"/>
    </reaction>
</comment>
<comment type="similarity">
    <text evidence="1">Belongs to the class I-like SAM-binding methyltransferase superfamily. C5-methyltransferase family.</text>
</comment>
<comment type="sequence caution" evidence="6">
    <conflict type="erroneous initiation">
        <sequence resource="EMBL-CDS" id="AAW73861"/>
    </conflict>
    <text>Extended N-terminus.</text>
</comment>
<evidence type="ECO:0000255" key="1">
    <source>
        <dbReference type="PROSITE-ProRule" id="PRU01016"/>
    </source>
</evidence>
<evidence type="ECO:0000255" key="2">
    <source>
        <dbReference type="PROSITE-ProRule" id="PRU10018"/>
    </source>
</evidence>
<evidence type="ECO:0000256" key="3">
    <source>
        <dbReference type="SAM" id="MobiDB-lite"/>
    </source>
</evidence>
<evidence type="ECO:0000303" key="4">
    <source>
    </source>
</evidence>
<evidence type="ECO:0000303" key="5">
    <source>
    </source>
</evidence>
<evidence type="ECO:0000305" key="6"/>
<evidence type="ECO:0000305" key="7">
    <source>
    </source>
</evidence>
<gene>
    <name type="primary">xorIIM</name>
    <name type="ordered locus">XOO0607</name>
</gene>
<feature type="chain" id="PRO_0000087910" description="Type II methyltransferase M.XorII">
    <location>
        <begin position="1"/>
        <end position="424"/>
    </location>
</feature>
<feature type="domain" description="SAM-dependent MTase C5-type" evidence="1">
    <location>
        <begin position="4"/>
        <end position="367"/>
    </location>
</feature>
<feature type="region of interest" description="Disordered" evidence="3">
    <location>
        <begin position="404"/>
        <end position="424"/>
    </location>
</feature>
<feature type="compositionally biased region" description="Basic and acidic residues" evidence="3">
    <location>
        <begin position="406"/>
        <end position="424"/>
    </location>
</feature>
<feature type="active site" evidence="1 2">
    <location>
        <position position="83"/>
    </location>
</feature>
<feature type="sequence conflict" description="In Ref. 1; AAA50432." evidence="6" ref="1">
    <original>GD</original>
    <variation>RS</variation>
    <location>
        <begin position="60"/>
        <end position="61"/>
    </location>
</feature>
<keyword id="KW-0238">DNA-binding</keyword>
<keyword id="KW-0489">Methyltransferase</keyword>
<keyword id="KW-1185">Reference proteome</keyword>
<keyword id="KW-0680">Restriction system</keyword>
<keyword id="KW-0949">S-adenosyl-L-methionine</keyword>
<keyword id="KW-0808">Transferase</keyword>
<proteinExistence type="inferred from homology"/>
<reference key="1">
    <citation type="journal article" date="1994" name="Mol. Gen. Genet.">
        <title>Identification of the XorII methyltransferase gene and a vsr homolog from Xanthomonas oryzae pv. oryzae.</title>
        <authorList>
            <person name="Choi S.H."/>
            <person name="Leach J.E."/>
        </authorList>
    </citation>
    <scope>NUCLEOTIDE SEQUENCE [GENOMIC DNA]</scope>
    <scope>FUNCTION</scope>
    <source>
        <strain>JW89011</strain>
    </source>
</reference>
<reference key="2">
    <citation type="journal article" date="2005" name="Nucleic Acids Res.">
        <title>The genome sequence of Xanthomonas oryzae pathovar oryzae KACC10331, the bacterial blight pathogen of rice.</title>
        <authorList>
            <person name="Lee B.-M."/>
            <person name="Park Y.-J."/>
            <person name="Park D.-S."/>
            <person name="Kang H.-W."/>
            <person name="Kim J.-G."/>
            <person name="Song E.-S."/>
            <person name="Park I.-C."/>
            <person name="Yoon U.-H."/>
            <person name="Hahn J.-H."/>
            <person name="Koo B.-S."/>
            <person name="Lee G.-B."/>
            <person name="Kim H."/>
            <person name="Park H.-S."/>
            <person name="Yoon K.-O."/>
            <person name="Kim J.-H."/>
            <person name="Jung C.-H."/>
            <person name="Koh N.-H."/>
            <person name="Seo J.-S."/>
            <person name="Go S.-J."/>
        </authorList>
    </citation>
    <scope>NUCLEOTIDE SEQUENCE [LARGE SCALE GENOMIC DNA]</scope>
    <source>
        <strain>KACC10331 / KXO85</strain>
    </source>
</reference>
<reference key="3">
    <citation type="journal article" date="2003" name="Nucleic Acids Res.">
        <title>A nomenclature for restriction enzymes, DNA methyltransferases, homing endonucleases and their genes.</title>
        <authorList>
            <person name="Roberts R.J."/>
            <person name="Belfort M."/>
            <person name="Bestor T."/>
            <person name="Bhagwat A.S."/>
            <person name="Bickle T.A."/>
            <person name="Bitinaite J."/>
            <person name="Blumenthal R.M."/>
            <person name="Degtyarev S.K."/>
            <person name="Dryden D.T."/>
            <person name="Dybvig K."/>
            <person name="Firman K."/>
            <person name="Gromova E.S."/>
            <person name="Gumport R.I."/>
            <person name="Halford S.E."/>
            <person name="Hattman S."/>
            <person name="Heitman J."/>
            <person name="Hornby D.P."/>
            <person name="Janulaitis A."/>
            <person name="Jeltsch A."/>
            <person name="Josephsen J."/>
            <person name="Kiss A."/>
            <person name="Klaenhammer T.R."/>
            <person name="Kobayashi I."/>
            <person name="Kong H."/>
            <person name="Krueger D.H."/>
            <person name="Lacks S."/>
            <person name="Marinus M.G."/>
            <person name="Miyahara M."/>
            <person name="Morgan R.D."/>
            <person name="Murray N.E."/>
            <person name="Nagaraja V."/>
            <person name="Piekarowicz A."/>
            <person name="Pingoud A."/>
            <person name="Raleigh E."/>
            <person name="Rao D.N."/>
            <person name="Reich N."/>
            <person name="Repin V.E."/>
            <person name="Selker E.U."/>
            <person name="Shaw P.C."/>
            <person name="Stein D.C."/>
            <person name="Stoddard B.L."/>
            <person name="Szybalski W."/>
            <person name="Trautner T.A."/>
            <person name="Van Etten J.L."/>
            <person name="Vitor J.M."/>
            <person name="Wilson G.G."/>
            <person name="Xu S.Y."/>
        </authorList>
    </citation>
    <scope>NOMENCLATURE</scope>
</reference>
<dbReference type="EC" id="2.1.1.37"/>
<dbReference type="EMBL" id="U06424">
    <property type="protein sequence ID" value="AAA50432.1"/>
    <property type="molecule type" value="Genomic_DNA"/>
</dbReference>
<dbReference type="EMBL" id="AE013598">
    <property type="protein sequence ID" value="AAW73861.1"/>
    <property type="status" value="ALT_INIT"/>
    <property type="molecule type" value="Genomic_DNA"/>
</dbReference>
<dbReference type="PIR" id="S46293">
    <property type="entry name" value="S46293"/>
</dbReference>
<dbReference type="SMR" id="P52311"/>
<dbReference type="STRING" id="291331.XOO0607"/>
<dbReference type="REBASE" id="10811">
    <property type="entry name" value="M.XorKI"/>
</dbReference>
<dbReference type="REBASE" id="203186">
    <property type="entry name" value="M.Bam1267ORF544P"/>
</dbReference>
<dbReference type="REBASE" id="3534">
    <property type="entry name" value="M.XorII"/>
</dbReference>
<dbReference type="KEGG" id="xoo:XOO0607"/>
<dbReference type="HOGENOM" id="CLU_006958_2_4_6"/>
<dbReference type="PRO" id="PR:P52311"/>
<dbReference type="Proteomes" id="UP000006735">
    <property type="component" value="Chromosome"/>
</dbReference>
<dbReference type="GO" id="GO:0003886">
    <property type="term" value="F:DNA (cytosine-5-)-methyltransferase activity"/>
    <property type="evidence" value="ECO:0007669"/>
    <property type="project" value="UniProtKB-EC"/>
</dbReference>
<dbReference type="GO" id="GO:0003677">
    <property type="term" value="F:DNA binding"/>
    <property type="evidence" value="ECO:0007669"/>
    <property type="project" value="UniProtKB-KW"/>
</dbReference>
<dbReference type="GO" id="GO:0009307">
    <property type="term" value="P:DNA restriction-modification system"/>
    <property type="evidence" value="ECO:0007669"/>
    <property type="project" value="UniProtKB-KW"/>
</dbReference>
<dbReference type="GO" id="GO:0032259">
    <property type="term" value="P:methylation"/>
    <property type="evidence" value="ECO:0007669"/>
    <property type="project" value="UniProtKB-KW"/>
</dbReference>
<dbReference type="CDD" id="cd00315">
    <property type="entry name" value="Cyt_C5_DNA_methylase"/>
    <property type="match status" value="1"/>
</dbReference>
<dbReference type="Gene3D" id="3.90.120.10">
    <property type="entry name" value="DNA Methylase, subunit A, domain 2"/>
    <property type="match status" value="1"/>
</dbReference>
<dbReference type="Gene3D" id="3.40.50.150">
    <property type="entry name" value="Vaccinia Virus protein VP39"/>
    <property type="match status" value="1"/>
</dbReference>
<dbReference type="InterPro" id="IPR050390">
    <property type="entry name" value="C5-Methyltransferase"/>
</dbReference>
<dbReference type="InterPro" id="IPR018117">
    <property type="entry name" value="C5_DNA_meth_AS"/>
</dbReference>
<dbReference type="InterPro" id="IPR001525">
    <property type="entry name" value="C5_MeTfrase"/>
</dbReference>
<dbReference type="InterPro" id="IPR031303">
    <property type="entry name" value="C5_meth_CS"/>
</dbReference>
<dbReference type="InterPro" id="IPR029063">
    <property type="entry name" value="SAM-dependent_MTases_sf"/>
</dbReference>
<dbReference type="NCBIfam" id="TIGR00675">
    <property type="entry name" value="dcm"/>
    <property type="match status" value="1"/>
</dbReference>
<dbReference type="PANTHER" id="PTHR10629">
    <property type="entry name" value="CYTOSINE-SPECIFIC METHYLTRANSFERASE"/>
    <property type="match status" value="1"/>
</dbReference>
<dbReference type="PANTHER" id="PTHR10629:SF52">
    <property type="entry name" value="DNA (CYTOSINE-5)-METHYLTRANSFERASE 1"/>
    <property type="match status" value="1"/>
</dbReference>
<dbReference type="Pfam" id="PF00145">
    <property type="entry name" value="DNA_methylase"/>
    <property type="match status" value="1"/>
</dbReference>
<dbReference type="PRINTS" id="PR00105">
    <property type="entry name" value="C5METTRFRASE"/>
</dbReference>
<dbReference type="SUPFAM" id="SSF53335">
    <property type="entry name" value="S-adenosyl-L-methionine-dependent methyltransferases"/>
    <property type="match status" value="1"/>
</dbReference>
<dbReference type="PROSITE" id="PS00094">
    <property type="entry name" value="C5_MTASE_1"/>
    <property type="match status" value="1"/>
</dbReference>
<dbReference type="PROSITE" id="PS00095">
    <property type="entry name" value="C5_MTASE_2"/>
    <property type="match status" value="1"/>
</dbReference>
<dbReference type="PROSITE" id="PS51679">
    <property type="entry name" value="SAM_MT_C5"/>
    <property type="match status" value="1"/>
</dbReference>
<protein>
    <recommendedName>
        <fullName evidence="4">Type II methyltransferase M.XorII</fullName>
        <shortName evidence="5">M.XorII</shortName>
        <ecNumber>2.1.1.37</ecNumber>
    </recommendedName>
    <alternativeName>
        <fullName>Cytosine-specific methyltransferase XorII</fullName>
    </alternativeName>
    <alternativeName>
        <fullName>Modification methylase XorII</fullName>
    </alternativeName>
</protein>
<accession>P52311</accession>
<accession>Q5H5A9</accession>
<organism>
    <name type="scientific">Xanthomonas oryzae pv. oryzae (strain KACC10331 / KXO85)</name>
    <dbReference type="NCBI Taxonomy" id="291331"/>
    <lineage>
        <taxon>Bacteria</taxon>
        <taxon>Pseudomonadati</taxon>
        <taxon>Pseudomonadota</taxon>
        <taxon>Gammaproteobacteria</taxon>
        <taxon>Lysobacterales</taxon>
        <taxon>Lysobacteraceae</taxon>
        <taxon>Xanthomonas</taxon>
    </lineage>
</organism>
<sequence>MTRPIGIDLFAGAGGLSLGFEQAGFDLVAAVDIDPIHCAAHKFNFPKCATVCKSVVDVTGDELRRIAGIGKRDIDIVIGGAPCQGFSLIGKRALDDSRNQLVHHYVRVVMELKPKYFVFENVKGLTVGKHRQFLKEVIEAFQNGGYDVVTDYRVLNAADYGVPQDRRRLILMGARKGLPLPAYPEPTGRTTVGDAIGDIPDAESFPELWERDWVKAKYGKPSTYAAYLRGKKDDPTDFGYRRQFDPMLLTGSLLTDHTELSRQRFAAIAPDDVEPVSRFKKLALNGICNTLRAGTASDRGAFTSPRPIHPTVPRVITVREAARLHSYPDWFRFHATKWHGFRQIGNSVPPLLARAVGGQIMKALRKKPEKPSEMLALGDQSLIGISMTDAAAMFGVSSTVIARRSRPVDRPAPRRHEERELVTA</sequence>